<accession>A1VN41</accession>
<comment type="function">
    <text evidence="1">Associates with the EF-Tu.GDP complex and induces the exchange of GDP to GTP. It remains bound to the aminoacyl-tRNA.EF-Tu.GTP complex up to the GTP hydrolysis stage on the ribosome.</text>
</comment>
<comment type="subcellular location">
    <subcellularLocation>
        <location evidence="1">Cytoplasm</location>
    </subcellularLocation>
</comment>
<comment type="similarity">
    <text evidence="1">Belongs to the EF-Ts family.</text>
</comment>
<evidence type="ECO:0000255" key="1">
    <source>
        <dbReference type="HAMAP-Rule" id="MF_00050"/>
    </source>
</evidence>
<gene>
    <name evidence="1" type="primary">tsf</name>
    <name type="ordered locus">Pnap_1759</name>
</gene>
<protein>
    <recommendedName>
        <fullName evidence="1">Elongation factor Ts</fullName>
        <shortName evidence="1">EF-Ts</shortName>
    </recommendedName>
</protein>
<proteinExistence type="inferred from homology"/>
<sequence>MAMAITAKMVAELRAKTDAPMMECKKALTEAEGDFEKAEELLRVKLGSKAGKAASRVTAEGVVTLARDGDDVALVEINCETDFVTKNDSFLAFANAVAEGVVKNNPADLAALGAMPLAMDSFGPTVEDVRRGLIGKIGENMTVRRFKRFASGKAASYLHGTRIGVVVEFEGDEAAAKDVAMHVAAMKPVALSSADVPAELVAKERSVAAAKAAEDASVAQAAGKPVQSAEIVAKRIEGGVQKYLKEVSLNNQTFVKNDKQTVEQMLKEKATVIKSFTLYIVGEGIEKKVDDFAAEVAAQVAAAKGA</sequence>
<dbReference type="EMBL" id="CP000529">
    <property type="protein sequence ID" value="ABM37069.1"/>
    <property type="molecule type" value="Genomic_DNA"/>
</dbReference>
<dbReference type="SMR" id="A1VN41"/>
<dbReference type="STRING" id="365044.Pnap_1759"/>
<dbReference type="KEGG" id="pna:Pnap_1759"/>
<dbReference type="eggNOG" id="COG0264">
    <property type="taxonomic scope" value="Bacteria"/>
</dbReference>
<dbReference type="HOGENOM" id="CLU_047155_0_2_4"/>
<dbReference type="Proteomes" id="UP000000644">
    <property type="component" value="Chromosome"/>
</dbReference>
<dbReference type="GO" id="GO:0005737">
    <property type="term" value="C:cytoplasm"/>
    <property type="evidence" value="ECO:0007669"/>
    <property type="project" value="UniProtKB-SubCell"/>
</dbReference>
<dbReference type="GO" id="GO:0003746">
    <property type="term" value="F:translation elongation factor activity"/>
    <property type="evidence" value="ECO:0007669"/>
    <property type="project" value="UniProtKB-UniRule"/>
</dbReference>
<dbReference type="CDD" id="cd14275">
    <property type="entry name" value="UBA_EF-Ts"/>
    <property type="match status" value="1"/>
</dbReference>
<dbReference type="FunFam" id="1.10.8.10:FF:000001">
    <property type="entry name" value="Elongation factor Ts"/>
    <property type="match status" value="1"/>
</dbReference>
<dbReference type="Gene3D" id="1.10.286.20">
    <property type="match status" value="1"/>
</dbReference>
<dbReference type="Gene3D" id="1.10.8.10">
    <property type="entry name" value="DNA helicase RuvA subunit, C-terminal domain"/>
    <property type="match status" value="1"/>
</dbReference>
<dbReference type="Gene3D" id="3.30.479.20">
    <property type="entry name" value="Elongation factor Ts, dimerisation domain"/>
    <property type="match status" value="2"/>
</dbReference>
<dbReference type="HAMAP" id="MF_00050">
    <property type="entry name" value="EF_Ts"/>
    <property type="match status" value="1"/>
</dbReference>
<dbReference type="InterPro" id="IPR036402">
    <property type="entry name" value="EF-Ts_dimer_sf"/>
</dbReference>
<dbReference type="InterPro" id="IPR001816">
    <property type="entry name" value="Transl_elong_EFTs/EF1B"/>
</dbReference>
<dbReference type="InterPro" id="IPR014039">
    <property type="entry name" value="Transl_elong_EFTs/EF1B_dimer"/>
</dbReference>
<dbReference type="InterPro" id="IPR018101">
    <property type="entry name" value="Transl_elong_Ts_CS"/>
</dbReference>
<dbReference type="InterPro" id="IPR009060">
    <property type="entry name" value="UBA-like_sf"/>
</dbReference>
<dbReference type="NCBIfam" id="TIGR00116">
    <property type="entry name" value="tsf"/>
    <property type="match status" value="1"/>
</dbReference>
<dbReference type="PANTHER" id="PTHR11741">
    <property type="entry name" value="ELONGATION FACTOR TS"/>
    <property type="match status" value="1"/>
</dbReference>
<dbReference type="PANTHER" id="PTHR11741:SF0">
    <property type="entry name" value="ELONGATION FACTOR TS, MITOCHONDRIAL"/>
    <property type="match status" value="1"/>
</dbReference>
<dbReference type="Pfam" id="PF00889">
    <property type="entry name" value="EF_TS"/>
    <property type="match status" value="1"/>
</dbReference>
<dbReference type="SUPFAM" id="SSF54713">
    <property type="entry name" value="Elongation factor Ts (EF-Ts), dimerisation domain"/>
    <property type="match status" value="2"/>
</dbReference>
<dbReference type="SUPFAM" id="SSF46934">
    <property type="entry name" value="UBA-like"/>
    <property type="match status" value="1"/>
</dbReference>
<dbReference type="PROSITE" id="PS01127">
    <property type="entry name" value="EF_TS_2"/>
    <property type="match status" value="1"/>
</dbReference>
<organism>
    <name type="scientific">Polaromonas naphthalenivorans (strain CJ2)</name>
    <dbReference type="NCBI Taxonomy" id="365044"/>
    <lineage>
        <taxon>Bacteria</taxon>
        <taxon>Pseudomonadati</taxon>
        <taxon>Pseudomonadota</taxon>
        <taxon>Betaproteobacteria</taxon>
        <taxon>Burkholderiales</taxon>
        <taxon>Comamonadaceae</taxon>
        <taxon>Polaromonas</taxon>
    </lineage>
</organism>
<feature type="chain" id="PRO_0000323461" description="Elongation factor Ts">
    <location>
        <begin position="1"/>
        <end position="306"/>
    </location>
</feature>
<feature type="region of interest" description="Involved in Mg(2+) ion dislocation from EF-Tu" evidence="1">
    <location>
        <begin position="81"/>
        <end position="84"/>
    </location>
</feature>
<keyword id="KW-0963">Cytoplasm</keyword>
<keyword id="KW-0251">Elongation factor</keyword>
<keyword id="KW-0648">Protein biosynthesis</keyword>
<keyword id="KW-1185">Reference proteome</keyword>
<name>EFTS_POLNA</name>
<reference key="1">
    <citation type="journal article" date="2009" name="Environ. Microbiol.">
        <title>The genome of Polaromonas naphthalenivorans strain CJ2, isolated from coal tar-contaminated sediment, reveals physiological and metabolic versatility and evolution through extensive horizontal gene transfer.</title>
        <authorList>
            <person name="Yagi J.M."/>
            <person name="Sims D."/>
            <person name="Brettin T."/>
            <person name="Bruce D."/>
            <person name="Madsen E.L."/>
        </authorList>
    </citation>
    <scope>NUCLEOTIDE SEQUENCE [LARGE SCALE GENOMIC DNA]</scope>
    <source>
        <strain>CJ2</strain>
    </source>
</reference>